<keyword id="KW-0966">Cell projection</keyword>
<keyword id="KW-1015">Disulfide bond</keyword>
<keyword id="KW-0245">EGF-like domain</keyword>
<keyword id="KW-0272">Extracellular matrix</keyword>
<keyword id="KW-0325">Glycoprotein</keyword>
<keyword id="KW-0358">Heparin-binding</keyword>
<keyword id="KW-0472">Membrane</keyword>
<keyword id="KW-1185">Reference proteome</keyword>
<keyword id="KW-0677">Repeat</keyword>
<keyword id="KW-0964">Secreted</keyword>
<keyword id="KW-0732">Signal</keyword>
<keyword id="KW-0812">Transmembrane</keyword>
<keyword id="KW-1133">Transmembrane helix</keyword>
<name>IMPG2_CHICK</name>
<feature type="signal peptide" evidence="4">
    <location>
        <begin position="1"/>
        <end position="27"/>
    </location>
</feature>
<feature type="chain" id="PRO_0000320152" description="Interphotoreceptor matrix proteoglycan 2">
    <location>
        <begin position="28"/>
        <end position="1423"/>
    </location>
</feature>
<feature type="topological domain" description="Extracellular" evidence="4">
    <location>
        <begin position="28"/>
        <end position="1289"/>
    </location>
</feature>
<feature type="transmembrane region" description="Helical" evidence="4">
    <location>
        <begin position="1290"/>
        <end position="1310"/>
    </location>
</feature>
<feature type="topological domain" description="Cytoplasmic" evidence="4">
    <location>
        <begin position="1311"/>
        <end position="1423"/>
    </location>
</feature>
<feature type="domain" description="SEA 1" evidence="6">
    <location>
        <begin position="245"/>
        <end position="358"/>
    </location>
</feature>
<feature type="domain" description="SEA 2" evidence="6">
    <location>
        <begin position="1083"/>
        <end position="1196"/>
    </location>
</feature>
<feature type="domain" description="EGF-like 1" evidence="5">
    <location>
        <begin position="1196"/>
        <end position="1234"/>
    </location>
</feature>
<feature type="domain" description="EGF-like 2" evidence="5">
    <location>
        <begin position="1237"/>
        <end position="1279"/>
    </location>
</feature>
<feature type="region of interest" description="Hyaluronan-binding motif involved in chondroitin sulfate A-binding" evidence="1">
    <location>
        <begin position="265"/>
        <end position="273"/>
    </location>
</feature>
<feature type="region of interest" description="Disordered" evidence="7">
    <location>
        <begin position="423"/>
        <end position="469"/>
    </location>
</feature>
<feature type="region of interest" description="Disordered" evidence="7">
    <location>
        <begin position="522"/>
        <end position="559"/>
    </location>
</feature>
<feature type="region of interest" description="Disordered" evidence="7">
    <location>
        <begin position="577"/>
        <end position="602"/>
    </location>
</feature>
<feature type="region of interest" description="Disordered" evidence="7">
    <location>
        <begin position="886"/>
        <end position="907"/>
    </location>
</feature>
<feature type="region of interest" description="Hyaluronan-binding motif involved in chondroitin sulfate C-binding" evidence="1">
    <location>
        <begin position="1266"/>
        <end position="1274"/>
    </location>
</feature>
<feature type="region of interest" description="Hyaluronan-binding motif involved in chondroitin sulfate C-binding" evidence="1">
    <location>
        <begin position="1322"/>
        <end position="1327"/>
    </location>
</feature>
<feature type="compositionally biased region" description="Acidic residues" evidence="7">
    <location>
        <begin position="523"/>
        <end position="532"/>
    </location>
</feature>
<feature type="compositionally biased region" description="Low complexity" evidence="7">
    <location>
        <begin position="537"/>
        <end position="546"/>
    </location>
</feature>
<feature type="compositionally biased region" description="Basic and acidic residues" evidence="7">
    <location>
        <begin position="577"/>
        <end position="587"/>
    </location>
</feature>
<feature type="compositionally biased region" description="Polar residues" evidence="7">
    <location>
        <begin position="889"/>
        <end position="902"/>
    </location>
</feature>
<feature type="glycosylation site" description="N-linked (GlcNAc...) asparagine" evidence="4">
    <location>
        <position position="150"/>
    </location>
</feature>
<feature type="glycosylation site" description="N-linked (GlcNAc...) asparagine" evidence="4">
    <location>
        <position position="325"/>
    </location>
</feature>
<feature type="glycosylation site" description="N-linked (GlcNAc...) asparagine" evidence="4">
    <location>
        <position position="375"/>
    </location>
</feature>
<feature type="glycosylation site" description="N-linked (GlcNAc...) asparagine" evidence="4">
    <location>
        <position position="676"/>
    </location>
</feature>
<feature type="glycosylation site" description="N-linked (GlcNAc...) asparagine" evidence="4">
    <location>
        <position position="1128"/>
    </location>
</feature>
<feature type="glycosylation site" description="N-linked (GlcNAc...) asparagine" evidence="4">
    <location>
        <position position="1142"/>
    </location>
</feature>
<feature type="glycosylation site" description="N-linked (GlcNAc...) asparagine" evidence="4">
    <location>
        <position position="1160"/>
    </location>
</feature>
<feature type="disulfide bond" evidence="5">
    <location>
        <begin position="1200"/>
        <end position="1211"/>
    </location>
</feature>
<feature type="disulfide bond" evidence="5">
    <location>
        <begin position="1205"/>
        <end position="1222"/>
    </location>
</feature>
<feature type="disulfide bond" evidence="5">
    <location>
        <begin position="1240"/>
        <end position="1253"/>
    </location>
</feature>
<feature type="disulfide bond" evidence="5">
    <location>
        <begin position="1247"/>
        <end position="1263"/>
    </location>
</feature>
<feature type="disulfide bond" evidence="5">
    <location>
        <begin position="1265"/>
        <end position="1278"/>
    </location>
</feature>
<evidence type="ECO:0000250" key="1"/>
<evidence type="ECO:0000250" key="2">
    <source>
        <dbReference type="UniProtKB" id="Q80XH2"/>
    </source>
</evidence>
<evidence type="ECO:0000250" key="3">
    <source>
        <dbReference type="UniProtKB" id="Q9BZV3"/>
    </source>
</evidence>
<evidence type="ECO:0000255" key="4"/>
<evidence type="ECO:0000255" key="5">
    <source>
        <dbReference type="PROSITE-ProRule" id="PRU00076"/>
    </source>
</evidence>
<evidence type="ECO:0000255" key="6">
    <source>
        <dbReference type="PROSITE-ProRule" id="PRU00188"/>
    </source>
</evidence>
<evidence type="ECO:0000256" key="7">
    <source>
        <dbReference type="SAM" id="MobiDB-lite"/>
    </source>
</evidence>
<evidence type="ECO:0000269" key="8">
    <source>
    </source>
</evidence>
<accession>Q1XI86</accession>
<protein>
    <recommendedName>
        <fullName>Interphotoreceptor matrix proteoglycan 2</fullName>
    </recommendedName>
    <alternativeName>
        <fullName>Sialoprotein associated with cones and rods proteoglycan</fullName>
        <shortName>Spacrcan</shortName>
    </alternativeName>
</protein>
<reference key="1">
    <citation type="journal article" date="2006" name="J. Biol. Chem.">
        <title>Molecular cloning and characterization of chick SPACRCAN.</title>
        <authorList>
            <person name="Inoue Y."/>
            <person name="Yoneda M."/>
            <person name="Zhao J."/>
            <person name="Miyaishi O."/>
            <person name="Ohno-Jinno A."/>
            <person name="Kataoka T."/>
            <person name="Isogai Z."/>
            <person name="Kimata K."/>
            <person name="Iwaki M."/>
            <person name="Zako M."/>
        </authorList>
    </citation>
    <scope>NUCLEOTIDE SEQUENCE [MRNA]</scope>
    <scope>DEVELOPMENTAL STAGE</scope>
    <scope>TISSUE SPECIFICITY</scope>
    <scope>GLYCOSYLATION</scope>
    <source>
        <tissue>Retina</tissue>
    </source>
</reference>
<sequence>MFAFLWKISLCLLVLGVITGDPQAVAAEEKQAKDASPTPQLGVWQFASPSLPPELRKLHGIVEAEQVNRHLLRRRKRSILFPSGVKICPDESVEQAIANHLKYFRLRVCQETVWEVFKTFWDRLPEREEYHTWMSLCEEGTMSIFEMGMNFSQSEEHRSLIVKKLSYTKEAMAGSCTDWSCGGTPTPASDADATTLRDAAANVPPPHEVSIESPPGGTSHEIEDADTTINNEIKKEDEIPVRPVTEQMIEFSIVIAGEKYSEELSDPDTAKYQLLSEQFVSQIQNVFEGLPGYKNIHVLEFSSPEEDSGVEVHYAVTFDGEAISNATWDLINLHSNKVEDNSFMGIEDNPTVVYTISDFQDYIAEILQKNALLENTSLTLDPNSLQLINVKEILHPTQEDPSWITEHPTVLEHVEFDDNTFSAERPSADESTVSNTLPFDFTKPDSTLDSEESDDNEIRPRPESLDSEVSLIPEAPLSSEADVTSLPDGLXLADWNQTPALVTAPVIEHDSLDSLEWLSAPDSSDEFEDTGLSDDFLLPSSPSSHLVPEEPPSTDDYTAPLLSAPTVASSSVIETDTKRTVTAEKEVVTQGSPADSSSADSLLHEXVEESPFPLEVHPVEGEXDIYLGDRMIFDDGSGSAFDGSGKGMEPSIWPWDVATLEPVFYPGPDSWLDDDNDSLPFRTEDIPEGLILDYILNSGNKLDDDPSKDENEGVASIKENFLDESEIFVFPETTTQQVPLLQTGEPSSVETSTQMETLSMDDDSFVKPSFVLEPPEDYSFADLPTGEDLFLPHSTGVSVEDTLLTSTVTLGXEDSLLTSTVAFSVEQPEESSVGQEIISEAXEHQNEDRPTVEELFTAGQSNVGEAATVGYLDKSSLETVLTAEPFEVSTDTSTEEQQSLDSSLADRDTGLAIRKPADVWPTDRVLEKTLDQTVQSAVPTAAQVSTAVPSLIHQATALEGFAGQDGTEHDTHVSMSISTILNSYVTITADTVELPSHLPPMTTTVSSSVVTLAKVGDETTRVLDVSVDLDHVSMVSFSPEPSEEAKSMTDSHMELTTHAHSTEMAGVAWPTHEIHNSTPVPSRALVVFFSLRVTNMMFSEDLFNKNSPEYKALEQRFLELLVPYLQSNLTGFQNLEILNFRNGSIVVNSRMKFAKPVPRNVTNAVYMILEDFCNTAYHTMNLAIDKYSLDVESGEQADPCKFQACNEFSECLVNRWSGEAECVCNPGYLSIDGLPCNSICDLQPNFCLNDGKCDISPGQGAICRCRVGENWWYRGEHCEEYVSEPLVVGIAIASVAGFLLVASAVIFFLARTLRDQYTKSDTEDSQGQGDSLSSIENAVKYNPMYESDTTGYSHYYRRYPQLTSYSSTSAETSTDYSSEEIRHIYENSELTKEEIQDRIRIIELYAKDRQFAEFVRQHQMKLL</sequence>
<dbReference type="EMBL" id="AB204591">
    <property type="protein sequence ID" value="BAE92938.1"/>
    <property type="molecule type" value="mRNA"/>
</dbReference>
<dbReference type="RefSeq" id="NP_001038104.2">
    <property type="nucleotide sequence ID" value="NM_001044639.2"/>
</dbReference>
<dbReference type="FunCoup" id="Q1XI86">
    <property type="interactions" value="27"/>
</dbReference>
<dbReference type="STRING" id="9031.ENSGALP00000036121"/>
<dbReference type="GlyCosmos" id="Q1XI86">
    <property type="glycosylation" value="7 sites, No reported glycans"/>
</dbReference>
<dbReference type="GlyGen" id="Q1XI86">
    <property type="glycosylation" value="9 sites"/>
</dbReference>
<dbReference type="PaxDb" id="9031-ENSGALP00000036121"/>
<dbReference type="GeneID" id="418393"/>
<dbReference type="KEGG" id="gga:418393"/>
<dbReference type="CTD" id="50939"/>
<dbReference type="VEuPathDB" id="HostDB:geneid_418393"/>
<dbReference type="eggNOG" id="ENOG502QT6W">
    <property type="taxonomic scope" value="Eukaryota"/>
</dbReference>
<dbReference type="InParanoid" id="Q1XI86"/>
<dbReference type="OrthoDB" id="8960773at2759"/>
<dbReference type="PhylomeDB" id="Q1XI86"/>
<dbReference type="PRO" id="PR:Q1XI86"/>
<dbReference type="Proteomes" id="UP000000539">
    <property type="component" value="Unassembled WGS sequence"/>
</dbReference>
<dbReference type="GO" id="GO:0042995">
    <property type="term" value="C:cell projection"/>
    <property type="evidence" value="ECO:0007669"/>
    <property type="project" value="UniProtKB-KW"/>
</dbReference>
<dbReference type="GO" id="GO:0005576">
    <property type="term" value="C:extracellular region"/>
    <property type="evidence" value="ECO:0007669"/>
    <property type="project" value="UniProtKB-KW"/>
</dbReference>
<dbReference type="GO" id="GO:0033165">
    <property type="term" value="C:interphotoreceptor matrix"/>
    <property type="evidence" value="ECO:0007669"/>
    <property type="project" value="UniProtKB-SubCell"/>
</dbReference>
<dbReference type="GO" id="GO:0016020">
    <property type="term" value="C:membrane"/>
    <property type="evidence" value="ECO:0007669"/>
    <property type="project" value="UniProtKB-KW"/>
</dbReference>
<dbReference type="GO" id="GO:0008201">
    <property type="term" value="F:heparin binding"/>
    <property type="evidence" value="ECO:0000318"/>
    <property type="project" value="GO_Central"/>
</dbReference>
<dbReference type="GO" id="GO:0005540">
    <property type="term" value="F:hyaluronic acid binding"/>
    <property type="evidence" value="ECO:0000318"/>
    <property type="project" value="GO_Central"/>
</dbReference>
<dbReference type="GO" id="GO:0007601">
    <property type="term" value="P:visual perception"/>
    <property type="evidence" value="ECO:0007669"/>
    <property type="project" value="InterPro"/>
</dbReference>
<dbReference type="CDD" id="cd00053">
    <property type="entry name" value="EGF"/>
    <property type="match status" value="1"/>
</dbReference>
<dbReference type="FunFam" id="3.30.70.960:FF:000002">
    <property type="entry name" value="Interphotoreceptor matrix proteoglycan 2"/>
    <property type="match status" value="1"/>
</dbReference>
<dbReference type="Gene3D" id="3.30.70.960">
    <property type="entry name" value="SEA domain"/>
    <property type="match status" value="2"/>
</dbReference>
<dbReference type="InterPro" id="IPR000742">
    <property type="entry name" value="EGF-like_dom"/>
</dbReference>
<dbReference type="InterPro" id="IPR039861">
    <property type="entry name" value="IMPG"/>
</dbReference>
<dbReference type="InterPro" id="IPR000082">
    <property type="entry name" value="SEA_dom"/>
</dbReference>
<dbReference type="InterPro" id="IPR036364">
    <property type="entry name" value="SEA_dom_sf"/>
</dbReference>
<dbReference type="PANTHER" id="PTHR12199">
    <property type="entry name" value="INTERPHOTORECEPTOR MATRIX PROTEOGLYCAN"/>
    <property type="match status" value="1"/>
</dbReference>
<dbReference type="PANTHER" id="PTHR12199:SF4">
    <property type="entry name" value="INTERPHOTORECEPTOR MATRIX PROTEOGLYCAN 2"/>
    <property type="match status" value="1"/>
</dbReference>
<dbReference type="Pfam" id="PF01390">
    <property type="entry name" value="SEA"/>
    <property type="match status" value="2"/>
</dbReference>
<dbReference type="SMART" id="SM00200">
    <property type="entry name" value="SEA"/>
    <property type="match status" value="2"/>
</dbReference>
<dbReference type="SUPFAM" id="SSF82671">
    <property type="entry name" value="SEA domain"/>
    <property type="match status" value="2"/>
</dbReference>
<dbReference type="PROSITE" id="PS01186">
    <property type="entry name" value="EGF_2"/>
    <property type="match status" value="1"/>
</dbReference>
<dbReference type="PROSITE" id="PS50026">
    <property type="entry name" value="EGF_3"/>
    <property type="match status" value="2"/>
</dbReference>
<dbReference type="PROSITE" id="PS50024">
    <property type="entry name" value="SEA"/>
    <property type="match status" value="2"/>
</dbReference>
<proteinExistence type="evidence at protein level"/>
<organism>
    <name type="scientific">Gallus gallus</name>
    <name type="common">Chicken</name>
    <dbReference type="NCBI Taxonomy" id="9031"/>
    <lineage>
        <taxon>Eukaryota</taxon>
        <taxon>Metazoa</taxon>
        <taxon>Chordata</taxon>
        <taxon>Craniata</taxon>
        <taxon>Vertebrata</taxon>
        <taxon>Euteleostomi</taxon>
        <taxon>Archelosauria</taxon>
        <taxon>Archosauria</taxon>
        <taxon>Dinosauria</taxon>
        <taxon>Saurischia</taxon>
        <taxon>Theropoda</taxon>
        <taxon>Coelurosauria</taxon>
        <taxon>Aves</taxon>
        <taxon>Neognathae</taxon>
        <taxon>Galloanserae</taxon>
        <taxon>Galliformes</taxon>
        <taxon>Phasianidae</taxon>
        <taxon>Phasianinae</taxon>
        <taxon>Gallus</taxon>
    </lineage>
</organism>
<gene>
    <name type="primary">IMPG2</name>
</gene>
<comment type="function">
    <text evidence="3">Chondroitin sulfate- and hyaluronan-binding proteoglycan involved in the organization of interphotoreceptor matrix.</text>
</comment>
<comment type="subcellular location">
    <subcellularLocation>
        <location evidence="2">Photoreceptor outer segment membrane</location>
        <topology evidence="4">Single-pass type I membrane protein</topology>
    </subcellularLocation>
    <subcellularLocation>
        <location evidence="2">Photoreceptor inner segment membrane</location>
        <topology evidence="4">Single-pass type I membrane protein</topology>
    </subcellularLocation>
    <subcellularLocation>
        <location evidence="2">Secreted</location>
        <location evidence="2">Extracellular space</location>
        <location evidence="2">Extracellular matrix</location>
        <location evidence="2">Interphotoreceptor matrix</location>
    </subcellularLocation>
</comment>
<comment type="tissue specificity">
    <text evidence="8">Expressed in retina.</text>
</comment>
<comment type="developmental stage">
    <text evidence="8">Detected in retina at 12 dpc with increased expression up to a peak at 16 dpc.</text>
</comment>
<comment type="PTM">
    <text evidence="8">Highly glycosylated (N- and O-linked carbohydrates).</text>
</comment>